<organism evidence="3">
    <name type="scientific">Rana japonica</name>
    <name type="common">Japanese reddish frog</name>
    <dbReference type="NCBI Taxonomy" id="8402"/>
    <lineage>
        <taxon>Eukaryota</taxon>
        <taxon>Metazoa</taxon>
        <taxon>Chordata</taxon>
        <taxon>Craniata</taxon>
        <taxon>Vertebrata</taxon>
        <taxon>Euteleostomi</taxon>
        <taxon>Amphibia</taxon>
        <taxon>Batrachia</taxon>
        <taxon>Anura</taxon>
        <taxon>Neobatrachia</taxon>
        <taxon>Ranoidea</taxon>
        <taxon>Ranidae</taxon>
        <taxon>Rana</taxon>
        <taxon>Rana</taxon>
    </lineage>
</organism>
<keyword id="KW-0878">Amphibian defense peptide</keyword>
<keyword id="KW-0044">Antibiotic</keyword>
<keyword id="KW-0929">Antimicrobial</keyword>
<keyword id="KW-0903">Direct protein sequencing</keyword>
<keyword id="KW-1015">Disulfide bond</keyword>
<keyword id="KW-0964">Secreted</keyword>
<sequence>FFPIGVFCKIFKTC</sequence>
<evidence type="ECO:0000250" key="1"/>
<evidence type="ECO:0000269" key="2">
    <source>
    </source>
</evidence>
<evidence type="ECO:0000305" key="3"/>
<name>JAP1_RANJA</name>
<feature type="peptide" id="PRO_0000043806" description="Japonicin-1">
    <location>
        <begin position="1"/>
        <end position="14"/>
    </location>
</feature>
<feature type="disulfide bond" evidence="1">
    <location>
        <begin position="8"/>
        <end position="14"/>
    </location>
</feature>
<dbReference type="GO" id="GO:0005576">
    <property type="term" value="C:extracellular region"/>
    <property type="evidence" value="ECO:0007669"/>
    <property type="project" value="UniProtKB-SubCell"/>
</dbReference>
<dbReference type="GO" id="GO:0016999">
    <property type="term" value="P:antibiotic metabolic process"/>
    <property type="evidence" value="ECO:0000314"/>
    <property type="project" value="UniProtKB"/>
</dbReference>
<dbReference type="GO" id="GO:0050829">
    <property type="term" value="P:defense response to Gram-negative bacterium"/>
    <property type="evidence" value="ECO:0000314"/>
    <property type="project" value="UniProtKB"/>
</dbReference>
<dbReference type="GO" id="GO:0050830">
    <property type="term" value="P:defense response to Gram-positive bacterium"/>
    <property type="evidence" value="ECO:0000314"/>
    <property type="project" value="UniProtKB"/>
</dbReference>
<reference evidence="3" key="1">
    <citation type="journal article" date="2002" name="Peptides">
        <title>Antimicrobial peptides with atypical structural features from the skin of the Japanese brown frog Rana japonica.</title>
        <authorList>
            <person name="Isaacson T."/>
            <person name="Soto A."/>
            <person name="Iwamuro S."/>
            <person name="Knoop F.C."/>
            <person name="Conlon J.M."/>
        </authorList>
    </citation>
    <scope>PROTEIN SEQUENCE</scope>
    <scope>FUNCTION</scope>
    <scope>MASS SPECTROMETRY</scope>
    <source>
        <tissue>Skin secretion</tissue>
    </source>
</reference>
<accession>P83305</accession>
<comment type="function">
    <text evidence="2">Antibacterial activity against the Gram-negative bacterium E.coli and the Gram-positive bacterium S.aureus.</text>
</comment>
<comment type="subcellular location">
    <subcellularLocation>
        <location>Secreted</location>
    </subcellularLocation>
</comment>
<comment type="tissue specificity">
    <text>Expressed by the skin dorsal glands.</text>
</comment>
<comment type="mass spectrometry"/>
<proteinExistence type="evidence at protein level"/>
<protein>
    <recommendedName>
        <fullName>Japonicin-1</fullName>
    </recommendedName>
</protein>